<proteinExistence type="inferred from homology"/>
<organism>
    <name type="scientific">Mycobacterium tuberculosis (strain CDC 1551 / Oshkosh)</name>
    <dbReference type="NCBI Taxonomy" id="83331"/>
    <lineage>
        <taxon>Bacteria</taxon>
        <taxon>Bacillati</taxon>
        <taxon>Actinomycetota</taxon>
        <taxon>Actinomycetes</taxon>
        <taxon>Mycobacteriales</taxon>
        <taxon>Mycobacteriaceae</taxon>
        <taxon>Mycobacterium</taxon>
        <taxon>Mycobacterium tuberculosis complex</taxon>
    </lineage>
</organism>
<gene>
    <name evidence="1" type="primary">ribBA</name>
    <name type="synonym">ribA</name>
    <name type="synonym">ribA2</name>
    <name type="ordered locus">MT1458</name>
</gene>
<comment type="function">
    <text evidence="1">Catalyzes the conversion of D-ribulose 5-phosphate to formate and 3,4-dihydroxy-2-butanone 4-phosphate.</text>
</comment>
<comment type="function">
    <text evidence="1">Catalyzes the conversion of GTP to 2,5-diamino-6-ribosylamino-4(3H)-pyrimidinone 5'-phosphate (DARP), formate and pyrophosphate.</text>
</comment>
<comment type="catalytic activity">
    <reaction evidence="1">
        <text>D-ribulose 5-phosphate = (2S)-2-hydroxy-3-oxobutyl phosphate + formate + H(+)</text>
        <dbReference type="Rhea" id="RHEA:18457"/>
        <dbReference type="ChEBI" id="CHEBI:15378"/>
        <dbReference type="ChEBI" id="CHEBI:15740"/>
        <dbReference type="ChEBI" id="CHEBI:58121"/>
        <dbReference type="ChEBI" id="CHEBI:58830"/>
        <dbReference type="EC" id="4.1.99.12"/>
    </reaction>
</comment>
<comment type="catalytic activity">
    <reaction evidence="1">
        <text>GTP + 4 H2O = 2,5-diamino-6-hydroxy-4-(5-phosphoribosylamino)-pyrimidine + formate + 2 phosphate + 3 H(+)</text>
        <dbReference type="Rhea" id="RHEA:23704"/>
        <dbReference type="ChEBI" id="CHEBI:15377"/>
        <dbReference type="ChEBI" id="CHEBI:15378"/>
        <dbReference type="ChEBI" id="CHEBI:15740"/>
        <dbReference type="ChEBI" id="CHEBI:37565"/>
        <dbReference type="ChEBI" id="CHEBI:43474"/>
        <dbReference type="ChEBI" id="CHEBI:58614"/>
        <dbReference type="EC" id="3.5.4.25"/>
    </reaction>
</comment>
<comment type="cofactor">
    <cofactor evidence="1">
        <name>Mg(2+)</name>
        <dbReference type="ChEBI" id="CHEBI:18420"/>
    </cofactor>
    <cofactor evidence="1">
        <name>Mn(2+)</name>
        <dbReference type="ChEBI" id="CHEBI:29035"/>
    </cofactor>
    <text evidence="1">Binds 2 divalent metal cations per subunit. Magnesium or manganese.</text>
</comment>
<comment type="cofactor">
    <cofactor evidence="1">
        <name>Zn(2+)</name>
        <dbReference type="ChEBI" id="CHEBI:29105"/>
    </cofactor>
    <text evidence="1">Binds 1 zinc ion per subunit.</text>
</comment>
<comment type="pathway">
    <text evidence="1">Cofactor biosynthesis; riboflavin biosynthesis; 2-hydroxy-3-oxobutyl phosphate from D-ribulose 5-phosphate: step 1/1.</text>
</comment>
<comment type="pathway">
    <text evidence="1">Cofactor biosynthesis; riboflavin biosynthesis; 5-amino-6-(D-ribitylamino)uracil from GTP: step 1/4.</text>
</comment>
<comment type="similarity">
    <text evidence="1">In the N-terminal section; belongs to the DHBP synthase family.</text>
</comment>
<comment type="similarity">
    <text evidence="1">In the C-terminal section; belongs to the GTP cyclohydrolase II family.</text>
</comment>
<accession>P9WHF0</accession>
<accession>L0T9B8</accession>
<accession>O07714</accession>
<accession>P0A5V0</accession>
<accession>P71684</accession>
<protein>
    <recommendedName>
        <fullName evidence="1">Riboflavin biosynthesis protein RibBA</fullName>
    </recommendedName>
    <domain>
        <recommendedName>
            <fullName evidence="1">3,4-dihydroxy-2-butanone 4-phosphate synthase</fullName>
            <shortName evidence="1">DHBP synthase</shortName>
            <ecNumber evidence="1">4.1.99.12</ecNumber>
        </recommendedName>
    </domain>
    <domain>
        <recommendedName>
            <fullName evidence="1">GTP cyclohydrolase-2</fullName>
            <ecNumber evidence="1">3.5.4.25</ecNumber>
        </recommendedName>
        <alternativeName>
            <fullName evidence="1">GTP cyclohydrolase II</fullName>
        </alternativeName>
    </domain>
</protein>
<reference key="1">
    <citation type="journal article" date="2002" name="J. Bacteriol.">
        <title>Whole-genome comparison of Mycobacterium tuberculosis clinical and laboratory strains.</title>
        <authorList>
            <person name="Fleischmann R.D."/>
            <person name="Alland D."/>
            <person name="Eisen J.A."/>
            <person name="Carpenter L."/>
            <person name="White O."/>
            <person name="Peterson J.D."/>
            <person name="DeBoy R.T."/>
            <person name="Dodson R.J."/>
            <person name="Gwinn M.L."/>
            <person name="Haft D.H."/>
            <person name="Hickey E.K."/>
            <person name="Kolonay J.F."/>
            <person name="Nelson W.C."/>
            <person name="Umayam L.A."/>
            <person name="Ermolaeva M.D."/>
            <person name="Salzberg S.L."/>
            <person name="Delcher A."/>
            <person name="Utterback T.R."/>
            <person name="Weidman J.F."/>
            <person name="Khouri H.M."/>
            <person name="Gill J."/>
            <person name="Mikula A."/>
            <person name="Bishai W."/>
            <person name="Jacobs W.R. Jr."/>
            <person name="Venter J.C."/>
            <person name="Fraser C.M."/>
        </authorList>
    </citation>
    <scope>NUCLEOTIDE SEQUENCE [LARGE SCALE GENOMIC DNA]</scope>
    <source>
        <strain>CDC 1551 / Oshkosh</strain>
    </source>
</reference>
<evidence type="ECO:0000255" key="1">
    <source>
        <dbReference type="HAMAP-Rule" id="MF_01283"/>
    </source>
</evidence>
<feature type="chain" id="PRO_0000428198" description="Riboflavin biosynthesis protein RibBA">
    <location>
        <begin position="1"/>
        <end position="425"/>
    </location>
</feature>
<feature type="region of interest" description="DHBP synthase">
    <location>
        <begin position="1"/>
        <end position="204"/>
    </location>
</feature>
<feature type="region of interest" description="GTP cyclohydrolase II">
    <location>
        <begin position="205"/>
        <end position="425"/>
    </location>
</feature>
<feature type="active site" description="Proton acceptor; for GTP cyclohydrolase activity" evidence="1">
    <location>
        <position position="337"/>
    </location>
</feature>
<feature type="active site" description="Nucleophile; for GTP cyclohydrolase activity" evidence="1">
    <location>
        <position position="339"/>
    </location>
</feature>
<feature type="binding site" evidence="1">
    <location>
        <begin position="28"/>
        <end position="29"/>
    </location>
    <ligand>
        <name>D-ribulose 5-phosphate</name>
        <dbReference type="ChEBI" id="CHEBI:58121"/>
    </ligand>
</feature>
<feature type="binding site" evidence="1">
    <location>
        <position position="29"/>
    </location>
    <ligand>
        <name>Mg(2+)</name>
        <dbReference type="ChEBI" id="CHEBI:18420"/>
        <label>1</label>
    </ligand>
</feature>
<feature type="binding site" evidence="1">
    <location>
        <position position="29"/>
    </location>
    <ligand>
        <name>Mg(2+)</name>
        <dbReference type="ChEBI" id="CHEBI:18420"/>
        <label>2</label>
    </ligand>
</feature>
<feature type="binding site" evidence="1">
    <location>
        <position position="33"/>
    </location>
    <ligand>
        <name>D-ribulose 5-phosphate</name>
        <dbReference type="ChEBI" id="CHEBI:58121"/>
    </ligand>
</feature>
<feature type="binding site" evidence="1">
    <location>
        <begin position="141"/>
        <end position="145"/>
    </location>
    <ligand>
        <name>D-ribulose 5-phosphate</name>
        <dbReference type="ChEBI" id="CHEBI:58121"/>
    </ligand>
</feature>
<feature type="binding site" evidence="1">
    <location>
        <position position="144"/>
    </location>
    <ligand>
        <name>Mg(2+)</name>
        <dbReference type="ChEBI" id="CHEBI:18420"/>
        <label>2</label>
    </ligand>
</feature>
<feature type="binding site" evidence="1">
    <location>
        <position position="165"/>
    </location>
    <ligand>
        <name>D-ribulose 5-phosphate</name>
        <dbReference type="ChEBI" id="CHEBI:58121"/>
    </ligand>
</feature>
<feature type="binding site" evidence="1">
    <location>
        <begin position="259"/>
        <end position="263"/>
    </location>
    <ligand>
        <name>GTP</name>
        <dbReference type="ChEBI" id="CHEBI:37565"/>
    </ligand>
</feature>
<feature type="binding site" evidence="1">
    <location>
        <position position="264"/>
    </location>
    <ligand>
        <name>Zn(2+)</name>
        <dbReference type="ChEBI" id="CHEBI:29105"/>
        <note>catalytic</note>
    </ligand>
</feature>
<feature type="binding site" evidence="1">
    <location>
        <position position="275"/>
    </location>
    <ligand>
        <name>Zn(2+)</name>
        <dbReference type="ChEBI" id="CHEBI:29105"/>
        <note>catalytic</note>
    </ligand>
</feature>
<feature type="binding site" evidence="1">
    <location>
        <position position="277"/>
    </location>
    <ligand>
        <name>Zn(2+)</name>
        <dbReference type="ChEBI" id="CHEBI:29105"/>
        <note>catalytic</note>
    </ligand>
</feature>
<feature type="binding site" evidence="1">
    <location>
        <position position="280"/>
    </location>
    <ligand>
        <name>GTP</name>
        <dbReference type="ChEBI" id="CHEBI:37565"/>
    </ligand>
</feature>
<feature type="binding site" evidence="1">
    <location>
        <begin position="303"/>
        <end position="305"/>
    </location>
    <ligand>
        <name>GTP</name>
        <dbReference type="ChEBI" id="CHEBI:37565"/>
    </ligand>
</feature>
<feature type="binding site" evidence="1">
    <location>
        <position position="325"/>
    </location>
    <ligand>
        <name>GTP</name>
        <dbReference type="ChEBI" id="CHEBI:37565"/>
    </ligand>
</feature>
<feature type="binding site" evidence="1">
    <location>
        <position position="360"/>
    </location>
    <ligand>
        <name>GTP</name>
        <dbReference type="ChEBI" id="CHEBI:37565"/>
    </ligand>
</feature>
<feature type="binding site" evidence="1">
    <location>
        <position position="365"/>
    </location>
    <ligand>
        <name>GTP</name>
        <dbReference type="ChEBI" id="CHEBI:37565"/>
    </ligand>
</feature>
<feature type="site" description="Essential for DHBP synthase activity" evidence="1">
    <location>
        <position position="127"/>
    </location>
</feature>
<feature type="site" description="Essential for DHBP synthase activity" evidence="1">
    <location>
        <position position="165"/>
    </location>
</feature>
<sequence>MTRLDSVERAVADIAAGKAVIVIDDEDRENEGDLIFAAEKATPEMVAFMVRYTSGYLCVPLDGAICDRLGLLPMYAVNQDKHGTAYTVTVDARNGIGTGISASDRATTMRLLADPTSVADDFTRPGHVVPLRAKDGGVLRRPGHTEAAVDLARMAGLQPAGAICEIVSQKDEGSMAHTDELRVFADEHGLALITIADLIEWRRKHEKHIERVAEARIPTRHGEFRAIGYTSIYEDVEHVALVRGEIAGPNADGDDVLVRVHSECLTGDVFGSRRCDCGPQLDAALAMVAREGRGVVLYMRGHEGRGIGLMHKLQAYQLQDAGADTVDANLKLGLPADARDYGIGAQILVDLGVRSMRLLTNNPAKRVGLDGYGLHIIERVPLPVRANAENIRYLMTKRDKLGHDLAGLDDFHESVHLPGEFGGAL</sequence>
<name>RIBBA_MYCTO</name>
<keyword id="KW-0342">GTP-binding</keyword>
<keyword id="KW-0378">Hydrolase</keyword>
<keyword id="KW-0456">Lyase</keyword>
<keyword id="KW-0460">Magnesium</keyword>
<keyword id="KW-0464">Manganese</keyword>
<keyword id="KW-0479">Metal-binding</keyword>
<keyword id="KW-0511">Multifunctional enzyme</keyword>
<keyword id="KW-0547">Nucleotide-binding</keyword>
<keyword id="KW-1185">Reference proteome</keyword>
<keyword id="KW-0686">Riboflavin biosynthesis</keyword>
<keyword id="KW-0862">Zinc</keyword>
<dbReference type="EC" id="4.1.99.12" evidence="1"/>
<dbReference type="EC" id="3.5.4.25" evidence="1"/>
<dbReference type="EMBL" id="AE000516">
    <property type="protein sequence ID" value="AAK45723.1"/>
    <property type="molecule type" value="Genomic_DNA"/>
</dbReference>
<dbReference type="PIR" id="D70902">
    <property type="entry name" value="D70902"/>
</dbReference>
<dbReference type="RefSeq" id="WP_003407334.1">
    <property type="nucleotide sequence ID" value="NZ_KK341227.1"/>
</dbReference>
<dbReference type="SMR" id="P9WHF0"/>
<dbReference type="KEGG" id="mtc:MT1458"/>
<dbReference type="PATRIC" id="fig|83331.31.peg.1567"/>
<dbReference type="HOGENOM" id="CLU_020273_1_2_11"/>
<dbReference type="UniPathway" id="UPA00275">
    <property type="reaction ID" value="UER00399"/>
</dbReference>
<dbReference type="UniPathway" id="UPA00275">
    <property type="reaction ID" value="UER00400"/>
</dbReference>
<dbReference type="Proteomes" id="UP000001020">
    <property type="component" value="Chromosome"/>
</dbReference>
<dbReference type="GO" id="GO:0005829">
    <property type="term" value="C:cytosol"/>
    <property type="evidence" value="ECO:0007669"/>
    <property type="project" value="TreeGrafter"/>
</dbReference>
<dbReference type="GO" id="GO:0008686">
    <property type="term" value="F:3,4-dihydroxy-2-butanone-4-phosphate synthase activity"/>
    <property type="evidence" value="ECO:0007669"/>
    <property type="project" value="UniProtKB-UniRule"/>
</dbReference>
<dbReference type="GO" id="GO:0005525">
    <property type="term" value="F:GTP binding"/>
    <property type="evidence" value="ECO:0007669"/>
    <property type="project" value="UniProtKB-KW"/>
</dbReference>
<dbReference type="GO" id="GO:0003935">
    <property type="term" value="F:GTP cyclohydrolase II activity"/>
    <property type="evidence" value="ECO:0007669"/>
    <property type="project" value="UniProtKB-UniRule"/>
</dbReference>
<dbReference type="GO" id="GO:0000287">
    <property type="term" value="F:magnesium ion binding"/>
    <property type="evidence" value="ECO:0007669"/>
    <property type="project" value="UniProtKB-UniRule"/>
</dbReference>
<dbReference type="GO" id="GO:0030145">
    <property type="term" value="F:manganese ion binding"/>
    <property type="evidence" value="ECO:0007669"/>
    <property type="project" value="UniProtKB-UniRule"/>
</dbReference>
<dbReference type="GO" id="GO:0008270">
    <property type="term" value="F:zinc ion binding"/>
    <property type="evidence" value="ECO:0007669"/>
    <property type="project" value="UniProtKB-UniRule"/>
</dbReference>
<dbReference type="GO" id="GO:0009231">
    <property type="term" value="P:riboflavin biosynthetic process"/>
    <property type="evidence" value="ECO:0007669"/>
    <property type="project" value="UniProtKB-UniRule"/>
</dbReference>
<dbReference type="CDD" id="cd00641">
    <property type="entry name" value="GTP_cyclohydro2"/>
    <property type="match status" value="1"/>
</dbReference>
<dbReference type="FunFam" id="3.40.50.10990:FF:000001">
    <property type="entry name" value="Riboflavin biosynthesis protein RibBA"/>
    <property type="match status" value="1"/>
</dbReference>
<dbReference type="FunFam" id="3.90.870.10:FF:000001">
    <property type="entry name" value="Riboflavin biosynthesis protein RibBA"/>
    <property type="match status" value="1"/>
</dbReference>
<dbReference type="Gene3D" id="3.90.870.10">
    <property type="entry name" value="DHBP synthase"/>
    <property type="match status" value="1"/>
</dbReference>
<dbReference type="Gene3D" id="3.40.50.10990">
    <property type="entry name" value="GTP cyclohydrolase II"/>
    <property type="match status" value="1"/>
</dbReference>
<dbReference type="HAMAP" id="MF_00179">
    <property type="entry name" value="RibA"/>
    <property type="match status" value="1"/>
</dbReference>
<dbReference type="HAMAP" id="MF_00180">
    <property type="entry name" value="RibB"/>
    <property type="match status" value="1"/>
</dbReference>
<dbReference type="HAMAP" id="MF_01283">
    <property type="entry name" value="RibBA"/>
    <property type="match status" value="1"/>
</dbReference>
<dbReference type="InterPro" id="IPR017945">
    <property type="entry name" value="DHBP_synth_RibB-like_a/b_dom"/>
</dbReference>
<dbReference type="InterPro" id="IPR000422">
    <property type="entry name" value="DHBP_synthase_RibB"/>
</dbReference>
<dbReference type="InterPro" id="IPR032677">
    <property type="entry name" value="GTP_cyclohydro_II"/>
</dbReference>
<dbReference type="InterPro" id="IPR000926">
    <property type="entry name" value="RibA"/>
</dbReference>
<dbReference type="InterPro" id="IPR036144">
    <property type="entry name" value="RibA-like_sf"/>
</dbReference>
<dbReference type="InterPro" id="IPR016299">
    <property type="entry name" value="Riboflavin_synth_RibBA"/>
</dbReference>
<dbReference type="NCBIfam" id="NF001591">
    <property type="entry name" value="PRK00393.1"/>
    <property type="match status" value="1"/>
</dbReference>
<dbReference type="NCBIfam" id="NF006803">
    <property type="entry name" value="PRK09311.1"/>
    <property type="match status" value="1"/>
</dbReference>
<dbReference type="NCBIfam" id="TIGR00505">
    <property type="entry name" value="ribA"/>
    <property type="match status" value="1"/>
</dbReference>
<dbReference type="NCBIfam" id="TIGR00506">
    <property type="entry name" value="ribB"/>
    <property type="match status" value="1"/>
</dbReference>
<dbReference type="PANTHER" id="PTHR21327:SF18">
    <property type="entry name" value="3,4-DIHYDROXY-2-BUTANONE 4-PHOSPHATE SYNTHASE"/>
    <property type="match status" value="1"/>
</dbReference>
<dbReference type="PANTHER" id="PTHR21327">
    <property type="entry name" value="GTP CYCLOHYDROLASE II-RELATED"/>
    <property type="match status" value="1"/>
</dbReference>
<dbReference type="Pfam" id="PF00926">
    <property type="entry name" value="DHBP_synthase"/>
    <property type="match status" value="1"/>
</dbReference>
<dbReference type="Pfam" id="PF00925">
    <property type="entry name" value="GTP_cyclohydro2"/>
    <property type="match status" value="1"/>
</dbReference>
<dbReference type="PIRSF" id="PIRSF001259">
    <property type="entry name" value="RibA"/>
    <property type="match status" value="1"/>
</dbReference>
<dbReference type="SUPFAM" id="SSF142695">
    <property type="entry name" value="RibA-like"/>
    <property type="match status" value="1"/>
</dbReference>
<dbReference type="SUPFAM" id="SSF55821">
    <property type="entry name" value="YrdC/RibB"/>
    <property type="match status" value="1"/>
</dbReference>